<dbReference type="Proteomes" id="UP000504608">
    <property type="component" value="Unplaced"/>
</dbReference>
<dbReference type="GO" id="GO:0050832">
    <property type="term" value="P:defense response to fungus"/>
    <property type="evidence" value="ECO:0007669"/>
    <property type="project" value="UniProtKB-KW"/>
</dbReference>
<dbReference type="GO" id="GO:0031640">
    <property type="term" value="P:killing of cells of another organism"/>
    <property type="evidence" value="ECO:0007669"/>
    <property type="project" value="UniProtKB-KW"/>
</dbReference>
<comment type="function">
    <text evidence="1">Has antifungal activity against B.cinerea, F.oxysporum and M.arachidicola. Inhibits cell-free translation in rabbit reticulocyte lysate system.</text>
</comment>
<protein>
    <recommendedName>
        <fullName>Cucurmoschin</fullName>
    </recommendedName>
</protein>
<name>CUCN_CUCMA</name>
<proteinExistence type="evidence at protein level"/>
<reference evidence="3" key="1">
    <citation type="journal article" date="2003" name="Peptides">
        <title>Isolation of cucurmoschin, a novel antifungal peptide abundant in arginine, glutamate and glycine residues from black pumpkin seeds.</title>
        <authorList>
            <person name="Wang H.X."/>
            <person name="Ng T.B."/>
        </authorList>
    </citation>
    <scope>PROTEIN SEQUENCE</scope>
    <scope>FUNCTION</scope>
    <source>
        <tissue evidence="1">Seed</tissue>
    </source>
</reference>
<accession>P84158</accession>
<feature type="peptide" id="PRO_0000045097" description="Cucurmoschin">
    <location>
        <begin position="1"/>
        <end position="19" status="greater than"/>
    </location>
</feature>
<feature type="non-terminal residue" evidence="2">
    <location>
        <position position="19"/>
    </location>
</feature>
<evidence type="ECO:0000269" key="1">
    <source>
    </source>
</evidence>
<evidence type="ECO:0000303" key="2">
    <source>
    </source>
</evidence>
<evidence type="ECO:0000305" key="3"/>
<keyword id="KW-0929">Antimicrobial</keyword>
<keyword id="KW-0903">Direct protein sequencing</keyword>
<keyword id="KW-0295">Fungicide</keyword>
<keyword id="KW-1185">Reference proteome</keyword>
<organism>
    <name type="scientific">Cucurbita maxima</name>
    <name type="common">Pumpkin</name>
    <name type="synonym">Winter squash</name>
    <dbReference type="NCBI Taxonomy" id="3661"/>
    <lineage>
        <taxon>Eukaryota</taxon>
        <taxon>Viridiplantae</taxon>
        <taxon>Streptophyta</taxon>
        <taxon>Embryophyta</taxon>
        <taxon>Tracheophyta</taxon>
        <taxon>Spermatophyta</taxon>
        <taxon>Magnoliopsida</taxon>
        <taxon>eudicotyledons</taxon>
        <taxon>Gunneridae</taxon>
        <taxon>Pentapetalae</taxon>
        <taxon>rosids</taxon>
        <taxon>fabids</taxon>
        <taxon>Cucurbitales</taxon>
        <taxon>Cucurbitaceae</taxon>
        <taxon>Cucurbiteae</taxon>
        <taxon>Cucurbita</taxon>
    </lineage>
</organism>
<sequence>PQRGEGGRAGNLLREEQEI</sequence>